<proteinExistence type="evidence at protein level"/>
<evidence type="ECO:0000250" key="1">
    <source>
        <dbReference type="UniProtKB" id="P02563"/>
    </source>
</evidence>
<evidence type="ECO:0000250" key="2">
    <source>
        <dbReference type="UniProtKB" id="Q02566"/>
    </source>
</evidence>
<evidence type="ECO:0000255" key="3"/>
<evidence type="ECO:0000255" key="4">
    <source>
        <dbReference type="PROSITE-ProRule" id="PRU00116"/>
    </source>
</evidence>
<evidence type="ECO:0000255" key="5">
    <source>
        <dbReference type="PROSITE-ProRule" id="PRU00782"/>
    </source>
</evidence>
<evidence type="ECO:0000255" key="6">
    <source>
        <dbReference type="PROSITE-ProRule" id="PRU01190"/>
    </source>
</evidence>
<evidence type="ECO:0000256" key="7">
    <source>
        <dbReference type="SAM" id="MobiDB-lite"/>
    </source>
</evidence>
<evidence type="ECO:0000269" key="8">
    <source>
    </source>
</evidence>
<evidence type="ECO:0000269" key="9">
    <source>
    </source>
</evidence>
<evidence type="ECO:0000269" key="10">
    <source>
    </source>
</evidence>
<evidence type="ECO:0000269" key="11">
    <source>
    </source>
</evidence>
<evidence type="ECO:0000269" key="12">
    <source>
    </source>
</evidence>
<evidence type="ECO:0000269" key="13">
    <source>
    </source>
</evidence>
<evidence type="ECO:0000269" key="14">
    <source>
    </source>
</evidence>
<evidence type="ECO:0000305" key="15"/>
<reference key="1">
    <citation type="journal article" date="1991" name="Am. J. Med. Genet.">
        <title>Complete sequence of human cardiac alpha-myosin heavy chain gene and amino acid comparison to other myosins based on structural and functional differences.</title>
        <authorList>
            <person name="Matsuoka R."/>
            <person name="Beisel K.W."/>
            <person name="Furutani M."/>
            <person name="Arai S."/>
            <person name="Takao A."/>
        </authorList>
    </citation>
    <scope>NUCLEOTIDE SEQUENCE [MRNA]</scope>
    <scope>VARIANTS ALA-1101 AND SER-1737</scope>
</reference>
<reference key="2">
    <citation type="journal article" date="1993" name="Genomics">
        <title>Structural organization of the human cardiac alpha-myosin heavy chain gene (MYH6).</title>
        <authorList>
            <person name="Epp T.A."/>
            <person name="Dixon I.M."/>
            <person name="Wang H.Y."/>
            <person name="Sole M.J."/>
            <person name="Liew C.-C."/>
        </authorList>
    </citation>
    <scope>NUCLEOTIDE SEQUENCE [GENOMIC DNA]</scope>
    <scope>VARIANT GLN-88</scope>
</reference>
<reference key="3">
    <citation type="submission" date="2009-09" db="EMBL/GenBank/DDBJ databases">
        <authorList>
            <consortium name="NHLBI resequencing and genotyping service (RS&amp;G)"/>
        </authorList>
    </citation>
    <scope>NUCLEOTIDE SEQUENCE [GENOMIC DNA]</scope>
</reference>
<reference key="4">
    <citation type="journal article" date="2003" name="Nature">
        <title>The DNA sequence and analysis of human chromosome 14.</title>
        <authorList>
            <person name="Heilig R."/>
            <person name="Eckenberg R."/>
            <person name="Petit J.-L."/>
            <person name="Fonknechten N."/>
            <person name="Da Silva C."/>
            <person name="Cattolico L."/>
            <person name="Levy M."/>
            <person name="Barbe V."/>
            <person name="De Berardinis V."/>
            <person name="Ureta-Vidal A."/>
            <person name="Pelletier E."/>
            <person name="Vico V."/>
            <person name="Anthouard V."/>
            <person name="Rowen L."/>
            <person name="Madan A."/>
            <person name="Qin S."/>
            <person name="Sun H."/>
            <person name="Du H."/>
            <person name="Pepin K."/>
            <person name="Artiguenave F."/>
            <person name="Robert C."/>
            <person name="Cruaud C."/>
            <person name="Bruels T."/>
            <person name="Jaillon O."/>
            <person name="Friedlander L."/>
            <person name="Samson G."/>
            <person name="Brottier P."/>
            <person name="Cure S."/>
            <person name="Segurens B."/>
            <person name="Aniere F."/>
            <person name="Samain S."/>
            <person name="Crespeau H."/>
            <person name="Abbasi N."/>
            <person name="Aiach N."/>
            <person name="Boscus D."/>
            <person name="Dickhoff R."/>
            <person name="Dors M."/>
            <person name="Dubois I."/>
            <person name="Friedman C."/>
            <person name="Gouyvenoux M."/>
            <person name="James R."/>
            <person name="Madan A."/>
            <person name="Mairey-Estrada B."/>
            <person name="Mangenot S."/>
            <person name="Martins N."/>
            <person name="Menard M."/>
            <person name="Oztas S."/>
            <person name="Ratcliffe A."/>
            <person name="Shaffer T."/>
            <person name="Trask B."/>
            <person name="Vacherie B."/>
            <person name="Bellemere C."/>
            <person name="Belser C."/>
            <person name="Besnard-Gonnet M."/>
            <person name="Bartol-Mavel D."/>
            <person name="Boutard M."/>
            <person name="Briez-Silla S."/>
            <person name="Combette S."/>
            <person name="Dufosse-Laurent V."/>
            <person name="Ferron C."/>
            <person name="Lechaplais C."/>
            <person name="Louesse C."/>
            <person name="Muselet D."/>
            <person name="Magdelenat G."/>
            <person name="Pateau E."/>
            <person name="Petit E."/>
            <person name="Sirvain-Trukniewicz P."/>
            <person name="Trybou A."/>
            <person name="Vega-Czarny N."/>
            <person name="Bataille E."/>
            <person name="Bluet E."/>
            <person name="Bordelais I."/>
            <person name="Dubois M."/>
            <person name="Dumont C."/>
            <person name="Guerin T."/>
            <person name="Haffray S."/>
            <person name="Hammadi R."/>
            <person name="Muanga J."/>
            <person name="Pellouin V."/>
            <person name="Robert D."/>
            <person name="Wunderle E."/>
            <person name="Gauguet G."/>
            <person name="Roy A."/>
            <person name="Sainte-Marthe L."/>
            <person name="Verdier J."/>
            <person name="Verdier-Discala C."/>
            <person name="Hillier L.W."/>
            <person name="Fulton L."/>
            <person name="McPherson J."/>
            <person name="Matsuda F."/>
            <person name="Wilson R."/>
            <person name="Scarpelli C."/>
            <person name="Gyapay G."/>
            <person name="Wincker P."/>
            <person name="Saurin W."/>
            <person name="Quetier F."/>
            <person name="Waterston R."/>
            <person name="Hood L."/>
            <person name="Weissenbach J."/>
        </authorList>
    </citation>
    <scope>NUCLEOTIDE SEQUENCE [LARGE SCALE GENOMIC DNA]</scope>
</reference>
<reference key="5">
    <citation type="submission" date="2005-09" db="EMBL/GenBank/DDBJ databases">
        <authorList>
            <person name="Mural R.J."/>
            <person name="Istrail S."/>
            <person name="Sutton G.G."/>
            <person name="Florea L."/>
            <person name="Halpern A.L."/>
            <person name="Mobarry C.M."/>
            <person name="Lippert R."/>
            <person name="Walenz B."/>
            <person name="Shatkay H."/>
            <person name="Dew I."/>
            <person name="Miller J.R."/>
            <person name="Flanigan M.J."/>
            <person name="Edwards N.J."/>
            <person name="Bolanos R."/>
            <person name="Fasulo D."/>
            <person name="Halldorsson B.V."/>
            <person name="Hannenhalli S."/>
            <person name="Turner R."/>
            <person name="Yooseph S."/>
            <person name="Lu F."/>
            <person name="Nusskern D.R."/>
            <person name="Shue B.C."/>
            <person name="Zheng X.H."/>
            <person name="Zhong F."/>
            <person name="Delcher A.L."/>
            <person name="Huson D.H."/>
            <person name="Kravitz S.A."/>
            <person name="Mouchard L."/>
            <person name="Reinert K."/>
            <person name="Remington K.A."/>
            <person name="Clark A.G."/>
            <person name="Waterman M.S."/>
            <person name="Eichler E.E."/>
            <person name="Adams M.D."/>
            <person name="Hunkapiller M.W."/>
            <person name="Myers E.W."/>
            <person name="Venter J.C."/>
        </authorList>
    </citation>
    <scope>NUCLEOTIDE SEQUENCE [LARGE SCALE GENOMIC DNA]</scope>
</reference>
<reference key="6">
    <citation type="journal article" date="2004" name="Genome Res.">
        <title>The status, quality, and expansion of the NIH full-length cDNA project: the Mammalian Gene Collection (MGC).</title>
        <authorList>
            <consortium name="The MGC Project Team"/>
        </authorList>
    </citation>
    <scope>NUCLEOTIDE SEQUENCE [LARGE SCALE MRNA]</scope>
</reference>
<reference key="7">
    <citation type="journal article" date="1989" name="Proc. Natl. Acad. Sci. U.S.A.">
        <title>Characterization of human cardiac myosin heavy chain genes.</title>
        <authorList>
            <person name="Yamauchi-Takihara K."/>
            <person name="Sole M.J."/>
            <person name="Liew J."/>
            <person name="Ing D."/>
            <person name="Liew C.-C."/>
        </authorList>
    </citation>
    <scope>NUCLEOTIDE SEQUENCE [GENOMIC DNA] OF 1-177 AND 1551-1939</scope>
    <scope>VARIANT GLN-88</scope>
</reference>
<reference key="8">
    <citation type="journal article" date="1989" name="Proc. Natl. Acad. Sci. U.S.A.">
        <authorList>
            <person name="Yamauchi-Takihara K."/>
            <person name="Sole M.J."/>
            <person name="Liew J."/>
            <person name="Ing D."/>
            <person name="Liew C.-C."/>
        </authorList>
    </citation>
    <scope>ERRATUM OF PUBMED:2726733</scope>
</reference>
<reference key="9">
    <citation type="journal article" date="1987" name="Nucleic Acids Res.">
        <title>Human cardiac myosin heavy chain genes and their linkage in the genome.</title>
        <authorList>
            <person name="Saez L.J."/>
            <person name="Gianola K.M."/>
            <person name="McNally E.M."/>
            <person name="Feghali R."/>
            <person name="Eddy R."/>
            <person name="Shows T.B."/>
            <person name="Leinwand L.A."/>
        </authorList>
    </citation>
    <scope>NUCLEOTIDE SEQUENCE [GENOMIC DNA] OF 1-67</scope>
</reference>
<reference key="10">
    <citation type="journal article" date="1988" name="J. Clin. Invest.">
        <title>Molecular cloning and characterization of human cardiac alpha- and beta-form myosin heavy chain complementary DNA clones. Regulation of expression during development and pressure overload in human atrium.</title>
        <authorList>
            <person name="Kurabayashi M."/>
            <person name="Tsuchimochi H."/>
            <person name="Komuro I."/>
            <person name="Takaku F."/>
            <person name="Yazaki Y."/>
        </authorList>
    </citation>
    <scope>NUCLEOTIDE SEQUENCE [MRNA] OF 1407-1939</scope>
</reference>
<reference key="11">
    <citation type="journal article" date="2002" name="Circulation">
        <title>Sarcomere protein gene mutations in hypertrophic cardiomyopathy of the elderly.</title>
        <authorList>
            <person name="Niimura H."/>
            <person name="Patton K.K."/>
            <person name="McKenna W.J."/>
            <person name="Soults J."/>
            <person name="Maron B.J."/>
            <person name="Seidman J.G."/>
            <person name="Seidman C.E."/>
        </authorList>
    </citation>
    <scope>VARIANT CMH14 GLN-795</scope>
</reference>
<reference key="12">
    <citation type="journal article" date="2005" name="Circulation">
        <title>Alpha-myosin heavy chain: a sarcomeric gene associated with dilated and hypertrophic phenotypes of cardiomyopathy.</title>
        <authorList>
            <person name="Carniel E."/>
            <person name="Taylor M.R."/>
            <person name="Sinagra G."/>
            <person name="Di Lenarda A."/>
            <person name="Ku L."/>
            <person name="Fain P.R."/>
            <person name="Boucek M.M."/>
            <person name="Cavanaugh J."/>
            <person name="Miocic S."/>
            <person name="Slavov D."/>
            <person name="Graw S.L."/>
            <person name="Feiger J."/>
            <person name="Zhu X.Z."/>
            <person name="Dao D."/>
            <person name="Ferguson D.A."/>
            <person name="Bristow M.R."/>
            <person name="Mestroni L."/>
        </authorList>
    </citation>
    <scope>VARIANTS CMD1EE LEU-830; SER-1004; LYS-1457 AND GLN-1502</scope>
    <scope>VARIANT CMH14 HIS-1065</scope>
    <scope>VARIANTS ARG-56; ASN-275; THR-1130 AND GLN-1295</scope>
</reference>
<reference key="13">
    <citation type="journal article" date="2005" name="Nat. Genet.">
        <title>Mutation in myosin heavy chain 6 causes atrial septal defect.</title>
        <authorList>
            <person name="Ching Y.-H."/>
            <person name="Ghosh T.K."/>
            <person name="Cross S.J."/>
            <person name="Packham E.A."/>
            <person name="Honeyman L."/>
            <person name="Loughna S."/>
            <person name="Robinson T.E."/>
            <person name="Dearlove A.M."/>
            <person name="Ribas G."/>
            <person name="Bonser A.J."/>
            <person name="Thomas N.R."/>
            <person name="Scotter A.J."/>
            <person name="Caves L.S.D."/>
            <person name="Tyrrell G.P."/>
            <person name="Newbury-Ecob R.A."/>
            <person name="Munnich A."/>
            <person name="Bonnet D."/>
            <person name="Brook J.D."/>
        </authorList>
    </citation>
    <scope>VARIANT ASD3 ASN-820</scope>
</reference>
<reference key="14">
    <citation type="journal article" date="2011" name="Nat. Genet.">
        <title>A rare variant in MYH6 is associated with high risk of sick sinus syndrome.</title>
        <authorList>
            <person name="Holm H."/>
            <person name="Gudbjartsson D.F."/>
            <person name="Sulem P."/>
            <person name="Masson G."/>
            <person name="Helgadottir H.T."/>
            <person name="Zanon C."/>
            <person name="Magnusson O.T."/>
            <person name="Helgason A."/>
            <person name="Saemundsdottir J."/>
            <person name="Gylfason A."/>
            <person name="Stefansdottir H."/>
            <person name="Gretarsdottir S."/>
            <person name="Matthiasson S.E."/>
            <person name="Thorgeirsson G.M."/>
            <person name="Jonasdottir A."/>
            <person name="Sigurdsson A."/>
            <person name="Stefansson H."/>
            <person name="Werge T."/>
            <person name="Rafnar T."/>
            <person name="Kiemeney L.A."/>
            <person name="Parvez B."/>
            <person name="Muhammad R."/>
            <person name="Roden D.M."/>
            <person name="Darbar D."/>
            <person name="Thorleifsson G."/>
            <person name="Walters G.B."/>
            <person name="Kong A."/>
            <person name="Thorsteinsdottir U."/>
            <person name="Arnar D.O."/>
            <person name="Stefansson K."/>
        </authorList>
    </citation>
    <scope>INVOLVEMENT IN SUSCEPTIBILITY TO SSS3</scope>
    <scope>VARIANT SSS3 TRP-721</scope>
</reference>
<comment type="function">
    <text>Muscle contraction.</text>
</comment>
<comment type="subunit">
    <text>Muscle myosin is a hexameric protein that consists of 2 heavy chain subunits (MHC), 2 alkali light chain subunits (MLC) and 2 regulatory light chain subunits (MLC-2).</text>
</comment>
<comment type="subcellular location">
    <subcellularLocation>
        <location>Cytoplasm</location>
        <location>Myofibril</location>
    </subcellularLocation>
    <text>Thick filaments of the myofibrils.</text>
</comment>
<comment type="domain">
    <text>The rodlike tail sequence is highly repetitive, showing cycles of a 28-residue repeat pattern composed of 4 heptapeptides, characteristic for alpha-helical coiled coils.</text>
</comment>
<comment type="domain">
    <text evidence="15">Limited proteolysis of myosin heavy chain produces 1 light meromyosin (LMM) and 1 heavy meromyosin (HMM). HMM can be further cleaved into 2 globular subfragments (S1) and 1 rod-shaped subfragment (S2).</text>
</comment>
<comment type="disease" evidence="9">
    <disease id="DI-00151">
        <name>Atrial septal defect 3</name>
        <acronym>ASD3</acronym>
        <description>A congenital heart malformation characterized by incomplete closure of the wall between the atria resulting in blood flow from the left to the right atria.</description>
        <dbReference type="MIM" id="614089"/>
    </disease>
    <text>The disease is caused by variants affecting the gene represented in this entry.</text>
</comment>
<comment type="disease" evidence="8 10">
    <disease id="DI-02680">
        <name>Cardiomyopathy, familial hypertrophic, 14</name>
        <acronym>CMH14</acronym>
        <description>A hereditary heart disorder characterized by ventricular hypertrophy, which is usually asymmetric and often involves the interventricular septum. The symptoms include dyspnea, syncope, collapse, palpitations, and chest pain. They can be readily provoked by exercise. The disorder has inter- and intrafamilial variability ranging from benign to malignant forms with high risk of cardiac failure and sudden cardiac death.</description>
        <dbReference type="MIM" id="613251"/>
    </disease>
    <text>The disease is caused by variants affecting the gene represented in this entry.</text>
</comment>
<comment type="disease" evidence="10">
    <disease id="DI-02682">
        <name>Cardiomyopathy, dilated, 1EE</name>
        <acronym>CMD1EE</acronym>
        <description>A disorder characterized by ventricular dilation and impaired systolic function, resulting in congestive heart failure and arrhythmia. Patients are at risk of premature death.</description>
        <dbReference type="MIM" id="613252"/>
    </disease>
    <text>The disease is caused by variants affecting the gene represented in this entry.</text>
</comment>
<comment type="disease" evidence="12">
    <disease id="DI-03155">
        <name>Sick sinus syndrome 3</name>
        <acronym>SSS3</acronym>
        <description>The term 'sick sinus syndrome' encompasses a variety of conditions caused by sinus node dysfunction. The most common clinical manifestations are syncope, presyncope, dizziness, and fatigue. Electrocardiogram typically shows sinus bradycardia, sinus arrest, and/or sinoatrial block. Episodes of atrial tachycardias coexisting with sinus bradycardia ('tachycardia-bradycardia syndrome') are also common in this disorder. SSS occurs most often in the elderly associated with underlying heart disease or previous cardiac surgery, but can also occur in the fetus, infant, or child without heart disease or other contributing factors.</description>
        <dbReference type="MIM" id="614090"/>
    </disease>
    <text evidence="12">Disease susceptibility is associated with variants affecting the gene represented in this entry. The lifetime risk of being diagnosed with sick sinus syndrome is higher for carriers of variant p.Arg721Trp than for non-carriers.</text>
</comment>
<comment type="miscellaneous">
    <text>The cardiac alpha isoform is a 'fast' ATPase myosin, while the beta isoform is a 'slow' ATPase.</text>
</comment>
<comment type="similarity">
    <text evidence="15">Belongs to the TRAFAC class myosin-kinesin ATPase superfamily. Myosin family.</text>
</comment>
<comment type="caution">
    <text evidence="15">Represents a conventional myosin. This protein should not be confused with the unconventional myosin-6 (MYO6).</text>
</comment>
<comment type="sequence caution" evidence="15">
    <conflict type="erroneous gene model prediction">
        <sequence resource="EMBL-CDS" id="CAA29120"/>
    </conflict>
</comment>
<organism>
    <name type="scientific">Homo sapiens</name>
    <name type="common">Human</name>
    <dbReference type="NCBI Taxonomy" id="9606"/>
    <lineage>
        <taxon>Eukaryota</taxon>
        <taxon>Metazoa</taxon>
        <taxon>Chordata</taxon>
        <taxon>Craniata</taxon>
        <taxon>Vertebrata</taxon>
        <taxon>Euteleostomi</taxon>
        <taxon>Mammalia</taxon>
        <taxon>Eutheria</taxon>
        <taxon>Euarchontoglires</taxon>
        <taxon>Primates</taxon>
        <taxon>Haplorrhini</taxon>
        <taxon>Catarrhini</taxon>
        <taxon>Hominidae</taxon>
        <taxon>Homo</taxon>
    </lineage>
</organism>
<feature type="chain" id="PRO_0000123401" description="Myosin-6">
    <location>
        <begin position="1"/>
        <end position="1939"/>
    </location>
</feature>
<feature type="domain" description="Myosin N-terminal SH3-like" evidence="6">
    <location>
        <begin position="32"/>
        <end position="81"/>
    </location>
</feature>
<feature type="domain" description="Myosin motor" evidence="5">
    <location>
        <begin position="85"/>
        <end position="780"/>
    </location>
</feature>
<feature type="domain" description="IQ" evidence="4">
    <location>
        <begin position="783"/>
        <end position="812"/>
    </location>
</feature>
<feature type="region of interest" description="Actin-binding">
    <location>
        <begin position="657"/>
        <end position="679"/>
    </location>
</feature>
<feature type="region of interest" description="Actin-binding">
    <location>
        <begin position="759"/>
        <end position="773"/>
    </location>
</feature>
<feature type="region of interest" description="Disordered" evidence="7">
    <location>
        <begin position="1826"/>
        <end position="1849"/>
    </location>
</feature>
<feature type="region of interest" description="Disordered" evidence="7">
    <location>
        <begin position="1909"/>
        <end position="1939"/>
    </location>
</feature>
<feature type="coiled-coil region" evidence="3">
    <location>
        <begin position="842"/>
        <end position="1939"/>
    </location>
</feature>
<feature type="compositionally biased region" description="Basic and acidic residues" evidence="7">
    <location>
        <begin position="1826"/>
        <end position="1837"/>
    </location>
</feature>
<feature type="compositionally biased region" description="Basic and acidic residues" evidence="7">
    <location>
        <begin position="1925"/>
        <end position="1939"/>
    </location>
</feature>
<feature type="binding site">
    <location>
        <begin position="178"/>
        <end position="185"/>
    </location>
    <ligand>
        <name>ATP</name>
        <dbReference type="ChEBI" id="CHEBI:30616"/>
    </ligand>
</feature>
<feature type="modified residue" description="N6,N6,N6-trimethyllysine" evidence="3">
    <location>
        <position position="129"/>
    </location>
</feature>
<feature type="modified residue" description="Phosphothreonine" evidence="1">
    <location>
        <position position="379"/>
    </location>
</feature>
<feature type="modified residue" description="Phosphoserine" evidence="1">
    <location>
        <position position="417"/>
    </location>
</feature>
<feature type="modified residue" description="Phosphoserine" evidence="1">
    <location>
        <position position="1139"/>
    </location>
</feature>
<feature type="modified residue" description="Phosphotyrosine" evidence="1">
    <location>
        <position position="1261"/>
    </location>
</feature>
<feature type="modified residue" description="Phosphoserine" evidence="2">
    <location>
        <position position="1271"/>
    </location>
</feature>
<feature type="modified residue" description="Phosphothreonine" evidence="1">
    <location>
        <position position="1277"/>
    </location>
</feature>
<feature type="modified residue" description="Phosphothreonine" evidence="1">
    <location>
        <position position="1284"/>
    </location>
</feature>
<feature type="modified residue" description="Phosphoserine" evidence="1">
    <location>
        <position position="1309"/>
    </location>
</feature>
<feature type="modified residue" description="Phosphotyrosine" evidence="1">
    <location>
        <position position="1310"/>
    </location>
</feature>
<feature type="modified residue" description="Phosphothreonine" evidence="1">
    <location>
        <position position="1311"/>
    </location>
</feature>
<feature type="modified residue" description="Phosphoserine" evidence="2">
    <location>
        <position position="1512"/>
    </location>
</feature>
<feature type="modified residue" description="Phosphothreonine" evidence="1">
    <location>
        <position position="1515"/>
    </location>
</feature>
<feature type="sequence variant" id="VAR_063550" description="In dbSNP:rs28711516." evidence="10">
    <original>G</original>
    <variation>R</variation>
    <location>
        <position position="56"/>
    </location>
</feature>
<feature type="sequence variant" id="VAR_030203" description="In dbSNP:rs442275." evidence="13 14">
    <original>E</original>
    <variation>Q</variation>
    <location>
        <position position="88"/>
    </location>
</feature>
<feature type="sequence variant" id="VAR_063551" description="In dbSNP:rs201327273." evidence="10">
    <original>I</original>
    <variation>N</variation>
    <location>
        <position position="275"/>
    </location>
</feature>
<feature type="sequence variant" id="VAR_065561" description="In SSS3; rare variant predisposing to sick sinus syndrome; dbSNP:rs387906656." evidence="12">
    <original>R</original>
    <variation>W</variation>
    <location>
        <position position="721"/>
    </location>
</feature>
<feature type="sequence variant" id="VAR_030204" description="In dbSNP:rs11847151.">
    <original>L</original>
    <variation>M</variation>
    <location>
        <position position="783"/>
    </location>
</feature>
<feature type="sequence variant" id="VAR_031882" description="In CMH14; late onset; dbSNP:rs267606907." evidence="8">
    <original>R</original>
    <variation>Q</variation>
    <location>
        <position position="795"/>
    </location>
</feature>
<feature type="sequence variant" id="VAR_031883" description="In ASD3; dbSNP:rs267606903." evidence="9">
    <original>I</original>
    <variation>N</variation>
    <location>
        <position position="820"/>
    </location>
</feature>
<feature type="sequence variant" id="VAR_063552" description="In CMD1EE; dbSNP:rs267606906." evidence="10">
    <original>P</original>
    <variation>L</variation>
    <location>
        <position position="830"/>
    </location>
</feature>
<feature type="sequence variant" id="VAR_063553" description="In CMD1EE; dbSNP:rs143978652." evidence="10">
    <original>A</original>
    <variation>S</variation>
    <location>
        <position position="1004"/>
    </location>
</feature>
<feature type="sequence variant" id="VAR_063554" description="In CMH14; dbSNP:rs267606904." evidence="10">
    <original>Q</original>
    <variation>H</variation>
    <location>
        <position position="1065"/>
    </location>
</feature>
<feature type="sequence variant" id="VAR_030205" description="In dbSNP:rs365990." evidence="11">
    <original>V</original>
    <variation>A</variation>
    <location>
        <position position="1101"/>
    </location>
</feature>
<feature type="sequence variant" id="VAR_063555" description="In dbSNP:rs28730771." evidence="10">
    <original>A</original>
    <variation>T</variation>
    <location>
        <position position="1130"/>
    </location>
</feature>
<feature type="sequence variant" id="VAR_063556" description="In dbSNP:rs34935550." evidence="10">
    <original>E</original>
    <variation>Q</variation>
    <location>
        <position position="1295"/>
    </location>
</feature>
<feature type="sequence variant" id="VAR_063557" description="In CMD1EE; dbSNP:rs267606905." evidence="10">
    <original>E</original>
    <variation>K</variation>
    <location>
        <position position="1457"/>
    </location>
</feature>
<feature type="sequence variant" id="VAR_063558" description="In CMD1EE; uncertain significance; dbSNP:rs199936506." evidence="10">
    <original>R</original>
    <variation>Q</variation>
    <location>
        <position position="1502"/>
    </location>
</feature>
<feature type="sequence variant" id="VAR_061364" description="In dbSNP:rs45574136.">
    <original>Q</original>
    <variation>L</variation>
    <location>
        <position position="1593"/>
    </location>
</feature>
<feature type="sequence variant" id="VAR_030206" description="In dbSNP:rs1059854." evidence="11">
    <original>T</original>
    <variation>S</variation>
    <location>
        <position position="1737"/>
    </location>
</feature>
<feature type="sequence conflict" description="In Ref. 9; CAA29120." evidence="15" ref="9">
    <original>A</original>
    <variation>S</variation>
    <location>
        <position position="4"/>
    </location>
</feature>
<feature type="sequence conflict" description="In Ref. 9; CAA29120." evidence="15" ref="9">
    <original>AA</original>
    <variation>T</variation>
    <location>
        <begin position="11"/>
        <end position="12"/>
    </location>
</feature>
<feature type="sequence conflict" description="In Ref. 1; BAA00791." evidence="15" ref="1">
    <original>Q</original>
    <variation>P</variation>
    <location>
        <position position="574"/>
    </location>
</feature>
<feature type="sequence conflict" description="In Ref. 1; BAA00791." evidence="15" ref="1">
    <original>A</original>
    <variation>G</variation>
    <location>
        <position position="608"/>
    </location>
</feature>
<feature type="sequence conflict" description="In Ref. 1; BAA00791." evidence="15" ref="1">
    <original>T</original>
    <variation>A</variation>
    <location>
        <position position="744"/>
    </location>
</feature>
<feature type="sequence conflict" description="In Ref. 1; BAA00791." evidence="15" ref="1">
    <original>M</original>
    <variation>I</variation>
    <location>
        <position position="790"/>
    </location>
</feature>
<feature type="sequence conflict" description="In Ref. 1; BAA00791." evidence="15" ref="1">
    <original>V</original>
    <variation>A</variation>
    <location>
        <position position="1014"/>
    </location>
</feature>
<feature type="sequence conflict" description="In Ref. 1; BAA00791." evidence="15" ref="1">
    <original>S</original>
    <variation>T</variation>
    <location>
        <position position="1021"/>
    </location>
</feature>
<feature type="sequence conflict" description="In Ref. 1; BAA00791." evidence="15" ref="1">
    <original>A</original>
    <variation>S</variation>
    <location>
        <position position="1290"/>
    </location>
</feature>
<feature type="sequence conflict" description="In Ref. 1; BAA00791." evidence="15" ref="1">
    <original>W</original>
    <variation>C</variation>
    <location>
        <position position="1373"/>
    </location>
</feature>
<feature type="sequence conflict" description="In Ref. 10; AAA36344." evidence="15" ref="10">
    <original>K</original>
    <variation>N</variation>
    <location>
        <position position="1533"/>
    </location>
</feature>
<feature type="sequence conflict" description="In Ref. 10; AAA36344." evidence="15" ref="10">
    <original>L</original>
    <variation>M</variation>
    <location>
        <position position="1540"/>
    </location>
</feature>
<feature type="sequence conflict" description="In Ref. 10; AAA36344." evidence="15" ref="10">
    <original>KL</original>
    <variation>NV</variation>
    <location>
        <begin position="1577"/>
        <end position="1578"/>
    </location>
</feature>
<feature type="sequence conflict" description="In Ref. 1; BAA00791 and 7; AAA60387." evidence="15" ref="1 7">
    <original>EQ</original>
    <variation>DR</variation>
    <location>
        <begin position="1705"/>
        <end position="1706"/>
    </location>
</feature>
<feature type="sequence conflict" description="In Ref. 1; BAA00791 and 10; AAA36344." evidence="15" ref="1 10">
    <original>E</original>
    <variation>D</variation>
    <location>
        <position position="1733"/>
    </location>
</feature>
<feature type="sequence conflict" description="In Ref. 1; BAA00791, 7; AAA60387 and 10; AAA36344." evidence="15" ref="1 7 10">
    <original>S</original>
    <variation>A</variation>
    <location>
        <position position="1734"/>
    </location>
</feature>
<feature type="sequence conflict" description="In Ref. 1; BAA00791." evidence="15" ref="1">
    <original>D</original>
    <variation>H</variation>
    <location>
        <position position="1763"/>
    </location>
</feature>
<feature type="sequence conflict" description="In Ref. 7; AAA60387." evidence="15" ref="7">
    <original>M</original>
    <variation>I</variation>
    <location>
        <position position="1788"/>
    </location>
</feature>
<feature type="sequence conflict" description="In Ref. 10; AAA36344." evidence="15" ref="10">
    <original>D</original>
    <variation>N</variation>
    <location>
        <position position="1871"/>
    </location>
</feature>
<feature type="sequence conflict" description="In Ref. 10; AAA36344." evidence="15" ref="10">
    <original>R</original>
    <variation>G</variation>
    <location>
        <position position="1882"/>
    </location>
</feature>
<feature type="sequence conflict" description="In Ref. 10; AAA36344." evidence="15" ref="10">
    <original>Q</original>
    <variation>R</variation>
    <location>
        <position position="1890"/>
    </location>
</feature>
<feature type="sequence conflict" description="In Ref. 10; AAA36344." evidence="15" ref="10">
    <location>
        <position position="1933"/>
    </location>
</feature>
<name>MYH6_HUMAN</name>
<accession>P13533</accession>
<accession>A2RTX1</accession>
<accession>D9YZU2</accession>
<accession>Q13943</accession>
<accession>Q14906</accession>
<accession>Q14907</accession>
<protein>
    <recommendedName>
        <fullName>Myosin-6</fullName>
    </recommendedName>
    <alternativeName>
        <fullName>Myosin heavy chain 6</fullName>
    </alternativeName>
    <alternativeName>
        <fullName>Myosin heavy chain, cardiac muscle alpha isoform</fullName>
        <shortName>MyHC-alpha</shortName>
    </alternativeName>
</protein>
<sequence>MTDAQMADFGAAAQYLRKSEKERLEAQTRPFDIRTECFVPDDKEEFVKAKILSREGGKVIAETENGKTVTVKEDQVLQQNPPKFDKIEDMAMLTFLHEPAVLFNLKERYAAWMIYTYSGLFCVTVNPYKWLPVYNAEVVAAYRGKKRSEAPPHIFSISDNAYQYMLTDRENQSILITGESGAGKTVNTKRVIQYFASIAAIGDRGKKDNANANKGTLEDQIIQANPALEAFGNAKTVRNDNSSRFGKFIRIHFGATGKLASADIETYLLEKSRVIFQLKAERNYHIFYQILSNKKPELLDMLLVTNNPYDYAFVSQGEVSVASIDDSEELMATDSAFDVLGFTSEEKAGVYKLTGAIMHYGNMKFKQKQREEQAEPDGTEDADKSAYLMGLNSADLLKGLCHPRVKVGNEYVTKGQSVQQVYYSIGALAKAVYEKMFNWMVTRINATLETKQPRQYFIGVLDIAGFEIFDFNSFEQLCINFTNEKLQQFFNHHMFVLEQEEYKKEGIEWTFIDFGMDLQACIDLIEKPMGIMSILEEECMFPKATDMTFKAKLYDNHLGKSNNFQKPRNIKGKQEAHFSLIHYAGTVDYNILGWLEKNKDPLNETVVALYQKSSLKLMATLFSSYATADTGDSGKSKGGKKKGSSFQTVSALHRENLNKLMTNLRTTHPHFVRCIIPNERKAPGVMDNPLVMHQLRCNGVLEGIRICRKGFPNRILYGDFRQRYRILNPVAIPEGQFIDSRKGTEKLLSSLDIDHNQYKFGHTKVFFKAGLLGLLEEMRDERLSRIITRMQAQARGQLMRIEFKKIVERRDALLVIQWNIRAFMGVKNWPWMKLYFKIKPLLKSAETEKEMATMKEEFGRIKETLEKSEARRKELEEKMVSLLQEKNDLQLQVQAEQDNLNDAEERCDQLIKNKIQLEAKVKEMNERLEDEEEMNAELTAKKRKLEDECSELKKDIDDLELTLAKVEKEKHATENKVKNLTEEMAGLDEIIAKLTKEKKALQEAHQQALDDLQVEEDKVNSLSKSKVKLEQQVDDLEGSLEQEKKVRMDLERAKRKLEGDLKLTQESIMDLENDKLQLEEKLKKKEFDINQQNSKIEDEQVLALQLQKKLKENQARIEELEEELEAERTARAKVEKLRSDLSRELEEISERLEEAGGATSVQIEMNKKREAEFQKMRRDLEEATLQHEATAAALRKKHADSVAELGEQIDNLQRVKQKLEKEKSEFKLELDDVTSNMEQIIKAKANLEKVSRTLEDQANEYRVKLEEAQRSLNDFTTQRAKLQTENGELARQLEEKEALISQLTRGKLSYTQQMEDLKRQLEEEGKAKNALAHALQSARHDCDLLREQYEEETEAKAELQRVLSKANSEVAQWRTKYETDAIQRTEELEEAKKKLAQRLQDAEEAVEAVNAKCSSLEKTKHRLQNEIEDLMVDVERSNAAAAALDKKQRNFDKILAEWKQKYEESQSELESSQKEARSLSTELFKLKNAYEESLEHLETFKRENKNLQEEISDLTEQLGEGGKNVHELEKVRKQLEVEKLELQSALEEAEASLEHEEGKILRAQLEFNQIKAEIERKLAEKDEEMEQAKRNHQRVVDSLQTSLDAETRSRNEVLRVKKKMEGDLNEMEIQLSHANRMAAEAQKQVKSLQSLLKDTQIQLDDAVRANDDLKENIAIVERRNNLLQAELEELRAVVEQTERSRKLAEQELIETSERVQLLHSQNTSLINQKKKMESDLTQLQSEVEEAVQECRNAEEKAKKAITDAAMMAEELKKEQDTSAHLERMKKNMEQTIKDLQHRLDEAEQIALKGGKKQLQKLEARVRELEGELEAEQKRNAESVKGMRKSERRIKELTYQTEEDKKNLLRLQDLVDKLQLKVKAYKRQAEEAEEQANTNLSKFRKVQHELDEAEERADIAESQVNKLRAKSRDIGAKQKMHDEE</sequence>
<keyword id="KW-0009">Actin-binding</keyword>
<keyword id="KW-0067">ATP-binding</keyword>
<keyword id="KW-0976">Atrial septal defect</keyword>
<keyword id="KW-0112">Calmodulin-binding</keyword>
<keyword id="KW-0122">Cardiomyopathy</keyword>
<keyword id="KW-0175">Coiled coil</keyword>
<keyword id="KW-0963">Cytoplasm</keyword>
<keyword id="KW-0225">Disease variant</keyword>
<keyword id="KW-0488">Methylation</keyword>
<keyword id="KW-0505">Motor protein</keyword>
<keyword id="KW-0514">Muscle protein</keyword>
<keyword id="KW-0518">Myosin</keyword>
<keyword id="KW-0547">Nucleotide-binding</keyword>
<keyword id="KW-0597">Phosphoprotein</keyword>
<keyword id="KW-1267">Proteomics identification</keyword>
<keyword id="KW-1185">Reference proteome</keyword>
<keyword id="KW-0787">Thick filament</keyword>
<gene>
    <name type="primary">MYH6</name>
    <name type="synonym">MYHCA</name>
</gene>
<dbReference type="EMBL" id="D00943">
    <property type="protein sequence ID" value="BAA00791.1"/>
    <property type="molecule type" value="mRNA"/>
</dbReference>
<dbReference type="EMBL" id="Z20656">
    <property type="protein sequence ID" value="CAA79675.1"/>
    <property type="molecule type" value="Genomic_DNA"/>
</dbReference>
<dbReference type="EMBL" id="GU324919">
    <property type="protein sequence ID" value="ADL14490.1"/>
    <property type="molecule type" value="Genomic_DNA"/>
</dbReference>
<dbReference type="EMBL" id="AL049829">
    <property type="status" value="NOT_ANNOTATED_CDS"/>
    <property type="molecule type" value="Genomic_DNA"/>
</dbReference>
<dbReference type="EMBL" id="CH471078">
    <property type="protein sequence ID" value="EAW66154.1"/>
    <property type="molecule type" value="Genomic_DNA"/>
</dbReference>
<dbReference type="EMBL" id="BC132667">
    <property type="protein sequence ID" value="AAI32668.1"/>
    <property type="molecule type" value="mRNA"/>
</dbReference>
<dbReference type="EMBL" id="M25140">
    <property type="protein sequence ID" value="AAA60386.1"/>
    <property type="molecule type" value="Genomic_DNA"/>
</dbReference>
<dbReference type="EMBL" id="M25162">
    <property type="protein sequence ID" value="AAA60386.1"/>
    <property type="status" value="JOINED"/>
    <property type="molecule type" value="Genomic_DNA"/>
</dbReference>
<dbReference type="EMBL" id="M25142">
    <property type="protein sequence ID" value="AAA60387.1"/>
    <property type="molecule type" value="Genomic_DNA"/>
</dbReference>
<dbReference type="EMBL" id="M25141">
    <property type="protein sequence ID" value="AAA60387.1"/>
    <property type="status" value="JOINED"/>
    <property type="molecule type" value="Genomic_DNA"/>
</dbReference>
<dbReference type="EMBL" id="X05632">
    <property type="protein sequence ID" value="CAA29120.1"/>
    <property type="status" value="ALT_SEQ"/>
    <property type="molecule type" value="Genomic_DNA"/>
</dbReference>
<dbReference type="EMBL" id="M21664">
    <property type="protein sequence ID" value="AAA36344.1"/>
    <property type="molecule type" value="mRNA"/>
</dbReference>
<dbReference type="CCDS" id="CCDS9600.1"/>
<dbReference type="PIR" id="A46762">
    <property type="entry name" value="A46762"/>
</dbReference>
<dbReference type="RefSeq" id="NP_002462.2">
    <property type="nucleotide sequence ID" value="NM_002471.4"/>
</dbReference>
<dbReference type="SMR" id="P13533"/>
<dbReference type="BioGRID" id="110709">
    <property type="interactions" value="67"/>
</dbReference>
<dbReference type="FunCoup" id="P13533">
    <property type="interactions" value="753"/>
</dbReference>
<dbReference type="IntAct" id="P13533">
    <property type="interactions" value="38"/>
</dbReference>
<dbReference type="STRING" id="9606.ENSP00000386041"/>
<dbReference type="ChEMBL" id="CHEMBL3831286"/>
<dbReference type="GlyGen" id="P13533">
    <property type="glycosylation" value="1 site, 1 O-linked glycan (1 site)"/>
</dbReference>
<dbReference type="iPTMnet" id="P13533"/>
<dbReference type="PhosphoSitePlus" id="P13533"/>
<dbReference type="SwissPalm" id="P13533"/>
<dbReference type="BioMuta" id="MYH6"/>
<dbReference type="DMDM" id="317373582"/>
<dbReference type="jPOST" id="P13533"/>
<dbReference type="MassIVE" id="P13533"/>
<dbReference type="PaxDb" id="9606-ENSP00000386041"/>
<dbReference type="PeptideAtlas" id="P13533"/>
<dbReference type="ProteomicsDB" id="52924"/>
<dbReference type="Pumba" id="P13533"/>
<dbReference type="ABCD" id="P13533">
    <property type="antibodies" value="1 sequenced antibody"/>
</dbReference>
<dbReference type="Antibodypedia" id="91">
    <property type="antibodies" value="169 antibodies from 27 providers"/>
</dbReference>
<dbReference type="DNASU" id="4624"/>
<dbReference type="Ensembl" id="ENST00000405093.9">
    <property type="protein sequence ID" value="ENSP00000386041.3"/>
    <property type="gene ID" value="ENSG00000197616.13"/>
</dbReference>
<dbReference type="GeneID" id="4624"/>
<dbReference type="KEGG" id="hsa:4624"/>
<dbReference type="MANE-Select" id="ENST00000405093.9">
    <property type="protein sequence ID" value="ENSP00000386041.3"/>
    <property type="RefSeq nucleotide sequence ID" value="NM_002471.4"/>
    <property type="RefSeq protein sequence ID" value="NP_002462.2"/>
</dbReference>
<dbReference type="UCSC" id="uc001wjv.3">
    <property type="organism name" value="human"/>
</dbReference>
<dbReference type="AGR" id="HGNC:7576"/>
<dbReference type="CTD" id="4624"/>
<dbReference type="DisGeNET" id="4624"/>
<dbReference type="GeneCards" id="MYH6"/>
<dbReference type="GeneReviews" id="MYH6"/>
<dbReference type="HGNC" id="HGNC:7576">
    <property type="gene designation" value="MYH6"/>
</dbReference>
<dbReference type="HPA" id="ENSG00000197616">
    <property type="expression patterns" value="Tissue enriched (heart)"/>
</dbReference>
<dbReference type="MalaCards" id="MYH6"/>
<dbReference type="MIM" id="160710">
    <property type="type" value="gene"/>
</dbReference>
<dbReference type="MIM" id="613251">
    <property type="type" value="phenotype"/>
</dbReference>
<dbReference type="MIM" id="613252">
    <property type="type" value="phenotype"/>
</dbReference>
<dbReference type="MIM" id="614089">
    <property type="type" value="phenotype"/>
</dbReference>
<dbReference type="MIM" id="614090">
    <property type="type" value="phenotype"/>
</dbReference>
<dbReference type="neXtProt" id="NX_P13533"/>
<dbReference type="OpenTargets" id="ENSG00000197616"/>
<dbReference type="Orphanet" id="99103">
    <property type="disease" value="Atrial septal defect, ostium secundum type"/>
</dbReference>
<dbReference type="Orphanet" id="154">
    <property type="disease" value="Familial isolated dilated cardiomyopathy"/>
</dbReference>
<dbReference type="Orphanet" id="166282">
    <property type="disease" value="Familial sick sinus syndrome"/>
</dbReference>
<dbReference type="PharmGKB" id="PA31373"/>
<dbReference type="VEuPathDB" id="HostDB:ENSG00000197616"/>
<dbReference type="eggNOG" id="KOG0161">
    <property type="taxonomic scope" value="Eukaryota"/>
</dbReference>
<dbReference type="GeneTree" id="ENSGT00940000154805"/>
<dbReference type="HOGENOM" id="CLU_000192_8_1_1"/>
<dbReference type="InParanoid" id="P13533"/>
<dbReference type="OMA" id="MVFRINH"/>
<dbReference type="OrthoDB" id="312459at2759"/>
<dbReference type="PAN-GO" id="P13533">
    <property type="GO annotations" value="9 GO annotations based on evolutionary models"/>
</dbReference>
<dbReference type="PhylomeDB" id="P13533"/>
<dbReference type="TreeFam" id="TF314375"/>
<dbReference type="PathwayCommons" id="P13533"/>
<dbReference type="Reactome" id="R-HSA-390522">
    <property type="pathway name" value="Striated Muscle Contraction"/>
</dbReference>
<dbReference type="SignaLink" id="P13533"/>
<dbReference type="SIGNOR" id="P13533"/>
<dbReference type="BioGRID-ORCS" id="4624">
    <property type="hits" value="12 hits in 1150 CRISPR screens"/>
</dbReference>
<dbReference type="ChiTaRS" id="MYH6">
    <property type="organism name" value="human"/>
</dbReference>
<dbReference type="GeneWiki" id="MYH6"/>
<dbReference type="GenomeRNAi" id="4624"/>
<dbReference type="Pharos" id="P13533">
    <property type="development level" value="Tbio"/>
</dbReference>
<dbReference type="PRO" id="PR:P13533"/>
<dbReference type="Proteomes" id="UP000005640">
    <property type="component" value="Chromosome 14"/>
</dbReference>
<dbReference type="RNAct" id="P13533">
    <property type="molecule type" value="protein"/>
</dbReference>
<dbReference type="Bgee" id="ENSG00000197616">
    <property type="expression patterns" value="Expressed in cardiac muscle of right atrium and 88 other cell types or tissues"/>
</dbReference>
<dbReference type="GO" id="GO:0005737">
    <property type="term" value="C:cytoplasm"/>
    <property type="evidence" value="ECO:0000318"/>
    <property type="project" value="GO_Central"/>
</dbReference>
<dbReference type="GO" id="GO:0005829">
    <property type="term" value="C:cytosol"/>
    <property type="evidence" value="ECO:0000304"/>
    <property type="project" value="Reactome"/>
</dbReference>
<dbReference type="GO" id="GO:0005859">
    <property type="term" value="C:muscle myosin complex"/>
    <property type="evidence" value="ECO:0000304"/>
    <property type="project" value="UniProtKB"/>
</dbReference>
<dbReference type="GO" id="GO:0030016">
    <property type="term" value="C:myofibril"/>
    <property type="evidence" value="ECO:0000250"/>
    <property type="project" value="BHF-UCL"/>
</dbReference>
<dbReference type="GO" id="GO:0016459">
    <property type="term" value="C:myosin complex"/>
    <property type="evidence" value="ECO:0000304"/>
    <property type="project" value="HGNC-UCL"/>
</dbReference>
<dbReference type="GO" id="GO:0032982">
    <property type="term" value="C:myosin filament"/>
    <property type="evidence" value="ECO:0000318"/>
    <property type="project" value="GO_Central"/>
</dbReference>
<dbReference type="GO" id="GO:0016460">
    <property type="term" value="C:myosin II complex"/>
    <property type="evidence" value="ECO:0000318"/>
    <property type="project" value="GO_Central"/>
</dbReference>
<dbReference type="GO" id="GO:0030017">
    <property type="term" value="C:sarcomere"/>
    <property type="evidence" value="ECO:0000304"/>
    <property type="project" value="HGNC-UCL"/>
</dbReference>
<dbReference type="GO" id="GO:0001725">
    <property type="term" value="C:stress fiber"/>
    <property type="evidence" value="ECO:0007669"/>
    <property type="project" value="Ensembl"/>
</dbReference>
<dbReference type="GO" id="GO:0030018">
    <property type="term" value="C:Z disc"/>
    <property type="evidence" value="ECO:0007669"/>
    <property type="project" value="Ensembl"/>
</dbReference>
<dbReference type="GO" id="GO:0051015">
    <property type="term" value="F:actin filament binding"/>
    <property type="evidence" value="ECO:0000318"/>
    <property type="project" value="GO_Central"/>
</dbReference>
<dbReference type="GO" id="GO:0005524">
    <property type="term" value="F:ATP binding"/>
    <property type="evidence" value="ECO:0007669"/>
    <property type="project" value="UniProtKB-KW"/>
</dbReference>
<dbReference type="GO" id="GO:0005516">
    <property type="term" value="F:calmodulin binding"/>
    <property type="evidence" value="ECO:0007669"/>
    <property type="project" value="UniProtKB-KW"/>
</dbReference>
<dbReference type="GO" id="GO:0000146">
    <property type="term" value="F:microfilament motor activity"/>
    <property type="evidence" value="ECO:0000314"/>
    <property type="project" value="BHF-UCL"/>
</dbReference>
<dbReference type="GO" id="GO:0017018">
    <property type="term" value="F:myosin phosphatase activity"/>
    <property type="evidence" value="ECO:0000304"/>
    <property type="project" value="Reactome"/>
</dbReference>
<dbReference type="GO" id="GO:0019901">
    <property type="term" value="F:protein kinase binding"/>
    <property type="evidence" value="ECO:0000353"/>
    <property type="project" value="UniProtKB"/>
</dbReference>
<dbReference type="GO" id="GO:0007512">
    <property type="term" value="P:adult heart development"/>
    <property type="evidence" value="ECO:0000315"/>
    <property type="project" value="HGNC-UCL"/>
</dbReference>
<dbReference type="GO" id="GO:0046034">
    <property type="term" value="P:ATP metabolic process"/>
    <property type="evidence" value="ECO:0000314"/>
    <property type="project" value="BHF-UCL"/>
</dbReference>
<dbReference type="GO" id="GO:0055009">
    <property type="term" value="P:atrial cardiac muscle tissue morphogenesis"/>
    <property type="evidence" value="ECO:0000315"/>
    <property type="project" value="HGNC-UCL"/>
</dbReference>
<dbReference type="GO" id="GO:0055013">
    <property type="term" value="P:cardiac muscle cell development"/>
    <property type="evidence" value="ECO:0000250"/>
    <property type="project" value="BHF-UCL"/>
</dbReference>
<dbReference type="GO" id="GO:0060048">
    <property type="term" value="P:cardiac muscle contraction"/>
    <property type="evidence" value="ECO:0000250"/>
    <property type="project" value="BHF-UCL"/>
</dbReference>
<dbReference type="GO" id="GO:0014898">
    <property type="term" value="P:cardiac muscle hypertrophy in response to stress"/>
    <property type="evidence" value="ECO:0007669"/>
    <property type="project" value="Ensembl"/>
</dbReference>
<dbReference type="GO" id="GO:0001701">
    <property type="term" value="P:in utero embryonic development"/>
    <property type="evidence" value="ECO:0000250"/>
    <property type="project" value="BHF-UCL"/>
</dbReference>
<dbReference type="GO" id="GO:0006936">
    <property type="term" value="P:muscle contraction"/>
    <property type="evidence" value="ECO:0000314"/>
    <property type="project" value="HGNC-UCL"/>
</dbReference>
<dbReference type="GO" id="GO:0030049">
    <property type="term" value="P:muscle filament sliding"/>
    <property type="evidence" value="ECO:0000315"/>
    <property type="project" value="HGNC-UCL"/>
</dbReference>
<dbReference type="GO" id="GO:0030239">
    <property type="term" value="P:myofibril assembly"/>
    <property type="evidence" value="ECO:0000250"/>
    <property type="project" value="BHF-UCL"/>
</dbReference>
<dbReference type="GO" id="GO:0008217">
    <property type="term" value="P:regulation of blood pressure"/>
    <property type="evidence" value="ECO:0000250"/>
    <property type="project" value="BHF-UCL"/>
</dbReference>
<dbReference type="GO" id="GO:0008016">
    <property type="term" value="P:regulation of heart contraction"/>
    <property type="evidence" value="ECO:0000250"/>
    <property type="project" value="BHF-UCL"/>
</dbReference>
<dbReference type="GO" id="GO:0060420">
    <property type="term" value="P:regulation of heart growth"/>
    <property type="evidence" value="ECO:0007669"/>
    <property type="project" value="Ensembl"/>
</dbReference>
<dbReference type="GO" id="GO:0002027">
    <property type="term" value="P:regulation of heart rate"/>
    <property type="evidence" value="ECO:0000314"/>
    <property type="project" value="HGNC-UCL"/>
</dbReference>
<dbReference type="GO" id="GO:0002026">
    <property type="term" value="P:regulation of the force of heart contraction"/>
    <property type="evidence" value="ECO:0000314"/>
    <property type="project" value="BHF-UCL"/>
</dbReference>
<dbReference type="GO" id="GO:0045214">
    <property type="term" value="P:sarcomere organization"/>
    <property type="evidence" value="ECO:0000250"/>
    <property type="project" value="BHF-UCL"/>
</dbReference>
<dbReference type="GO" id="GO:0006941">
    <property type="term" value="P:striated muscle contraction"/>
    <property type="evidence" value="ECO:0000315"/>
    <property type="project" value="BHF-UCL"/>
</dbReference>
<dbReference type="GO" id="GO:0055010">
    <property type="term" value="P:ventricular cardiac muscle tissue morphogenesis"/>
    <property type="evidence" value="ECO:0000315"/>
    <property type="project" value="HGNC-UCL"/>
</dbReference>
<dbReference type="GO" id="GO:0007522">
    <property type="term" value="P:visceral muscle development"/>
    <property type="evidence" value="ECO:0000250"/>
    <property type="project" value="BHF-UCL"/>
</dbReference>
<dbReference type="CDD" id="cd01377">
    <property type="entry name" value="MYSc_class_II"/>
    <property type="match status" value="1"/>
</dbReference>
<dbReference type="FunFam" id="1.10.10.820:FF:000001">
    <property type="entry name" value="Myosin heavy chain"/>
    <property type="match status" value="1"/>
</dbReference>
<dbReference type="FunFam" id="1.20.5.340:FF:000002">
    <property type="entry name" value="Myosin heavy chain"/>
    <property type="match status" value="1"/>
</dbReference>
<dbReference type="FunFam" id="1.20.5.340:FF:000003">
    <property type="entry name" value="Myosin heavy chain"/>
    <property type="match status" value="1"/>
</dbReference>
<dbReference type="FunFam" id="1.20.5.340:FF:000004">
    <property type="entry name" value="Myosin heavy chain"/>
    <property type="match status" value="1"/>
</dbReference>
<dbReference type="FunFam" id="1.20.5.340:FF:000006">
    <property type="entry name" value="Myosin heavy chain"/>
    <property type="match status" value="1"/>
</dbReference>
<dbReference type="FunFam" id="1.20.5.340:FF:000013">
    <property type="entry name" value="Myosin heavy chain"/>
    <property type="match status" value="1"/>
</dbReference>
<dbReference type="FunFam" id="1.20.5.370:FF:000001">
    <property type="entry name" value="Myosin heavy chain"/>
    <property type="match status" value="1"/>
</dbReference>
<dbReference type="FunFam" id="1.20.5.370:FF:000002">
    <property type="entry name" value="Myosin heavy chain"/>
    <property type="match status" value="1"/>
</dbReference>
<dbReference type="FunFam" id="1.20.5.370:FF:000003">
    <property type="entry name" value="Myosin heavy chain"/>
    <property type="match status" value="1"/>
</dbReference>
<dbReference type="FunFam" id="1.20.5.370:FF:000007">
    <property type="entry name" value="Myosin heavy chain"/>
    <property type="match status" value="1"/>
</dbReference>
<dbReference type="FunFam" id="1.20.5.370:FF:000008">
    <property type="entry name" value="Myosin heavy chain"/>
    <property type="match status" value="1"/>
</dbReference>
<dbReference type="FunFam" id="1.20.5.4820:FF:000001">
    <property type="entry name" value="Myosin heavy chain"/>
    <property type="match status" value="1"/>
</dbReference>
<dbReference type="FunFam" id="1.20.58.530:FF:000001">
    <property type="entry name" value="Myosin heavy chain"/>
    <property type="match status" value="1"/>
</dbReference>
<dbReference type="FunFam" id="2.30.30.360:FF:000001">
    <property type="entry name" value="Myosin heavy chain"/>
    <property type="match status" value="1"/>
</dbReference>
<dbReference type="FunFam" id="1.20.120.720:FF:000001">
    <property type="entry name" value="Myosin heavy chain, muscle"/>
    <property type="match status" value="1"/>
</dbReference>
<dbReference type="FunFam" id="3.40.850.10:FF:000115">
    <property type="entry name" value="Myosin heavy polypeptide 6"/>
    <property type="match status" value="1"/>
</dbReference>
<dbReference type="FunFam" id="3.40.850.10:FF:000101">
    <property type="entry name" value="Slow myosin heavy chain 2"/>
    <property type="match status" value="1"/>
</dbReference>
<dbReference type="Gene3D" id="1.10.10.820">
    <property type="match status" value="1"/>
</dbReference>
<dbReference type="Gene3D" id="1.20.5.340">
    <property type="match status" value="5"/>
</dbReference>
<dbReference type="Gene3D" id="1.20.5.370">
    <property type="match status" value="5"/>
</dbReference>
<dbReference type="Gene3D" id="1.20.5.4820">
    <property type="match status" value="1"/>
</dbReference>
<dbReference type="Gene3D" id="1.20.58.530">
    <property type="match status" value="1"/>
</dbReference>
<dbReference type="Gene3D" id="6.10.250.2420">
    <property type="match status" value="1"/>
</dbReference>
<dbReference type="Gene3D" id="3.40.850.10">
    <property type="entry name" value="Kinesin motor domain"/>
    <property type="match status" value="1"/>
</dbReference>
<dbReference type="Gene3D" id="2.30.30.360">
    <property type="entry name" value="Myosin S1 fragment, N-terminal"/>
    <property type="match status" value="1"/>
</dbReference>
<dbReference type="Gene3D" id="1.20.120.720">
    <property type="entry name" value="Myosin VI head, motor domain, U50 subdomain"/>
    <property type="match status" value="1"/>
</dbReference>
<dbReference type="InterPro" id="IPR036961">
    <property type="entry name" value="Kinesin_motor_dom_sf"/>
</dbReference>
<dbReference type="InterPro" id="IPR001609">
    <property type="entry name" value="Myosin_head_motor_dom-like"/>
</dbReference>
<dbReference type="InterPro" id="IPR004009">
    <property type="entry name" value="Myosin_N"/>
</dbReference>
<dbReference type="InterPro" id="IPR008989">
    <property type="entry name" value="Myosin_S1_N"/>
</dbReference>
<dbReference type="InterPro" id="IPR002928">
    <property type="entry name" value="Myosin_tail"/>
</dbReference>
<dbReference type="InterPro" id="IPR027417">
    <property type="entry name" value="P-loop_NTPase"/>
</dbReference>
<dbReference type="InterPro" id="IPR014751">
    <property type="entry name" value="XRCC4-like_C"/>
</dbReference>
<dbReference type="PANTHER" id="PTHR45615">
    <property type="entry name" value="MYOSIN HEAVY CHAIN, NON-MUSCLE"/>
    <property type="match status" value="1"/>
</dbReference>
<dbReference type="PANTHER" id="PTHR45615:SF69">
    <property type="entry name" value="MYOSIN-6"/>
    <property type="match status" value="1"/>
</dbReference>
<dbReference type="Pfam" id="PF00063">
    <property type="entry name" value="Myosin_head"/>
    <property type="match status" value="1"/>
</dbReference>
<dbReference type="Pfam" id="PF02736">
    <property type="entry name" value="Myosin_N"/>
    <property type="match status" value="1"/>
</dbReference>
<dbReference type="Pfam" id="PF01576">
    <property type="entry name" value="Myosin_tail_1"/>
    <property type="match status" value="1"/>
</dbReference>
<dbReference type="PRINTS" id="PR00193">
    <property type="entry name" value="MYOSINHEAVY"/>
</dbReference>
<dbReference type="SMART" id="SM00242">
    <property type="entry name" value="MYSc"/>
    <property type="match status" value="1"/>
</dbReference>
<dbReference type="SUPFAM" id="SSF90257">
    <property type="entry name" value="Myosin rod fragments"/>
    <property type="match status" value="4"/>
</dbReference>
<dbReference type="SUPFAM" id="SSF52540">
    <property type="entry name" value="P-loop containing nucleoside triphosphate hydrolases"/>
    <property type="match status" value="1"/>
</dbReference>
<dbReference type="SUPFAM" id="SSF57997">
    <property type="entry name" value="Tropomyosin"/>
    <property type="match status" value="1"/>
</dbReference>
<dbReference type="PROSITE" id="PS50096">
    <property type="entry name" value="IQ"/>
    <property type="match status" value="1"/>
</dbReference>
<dbReference type="PROSITE" id="PS51456">
    <property type="entry name" value="MYOSIN_MOTOR"/>
    <property type="match status" value="1"/>
</dbReference>
<dbReference type="PROSITE" id="PS51844">
    <property type="entry name" value="SH3_LIKE"/>
    <property type="match status" value="1"/>
</dbReference>